<accession>Q0KBC8</accession>
<comment type="function">
    <text evidence="1">Catalyzes the ATP-dependent phosphorylation of 3-oxo-tetronate to 3-oxo-tetronate 4-phosphate.</text>
</comment>
<comment type="catalytic activity">
    <reaction evidence="1">
        <text>3-dehydro-L-erythronate + ATP = 3-dehydro-4-O-phospho-L-erythronate + ADP + H(+)</text>
        <dbReference type="Rhea" id="RHEA:52552"/>
        <dbReference type="ChEBI" id="CHEBI:15378"/>
        <dbReference type="ChEBI" id="CHEBI:30616"/>
        <dbReference type="ChEBI" id="CHEBI:136592"/>
        <dbReference type="ChEBI" id="CHEBI:136670"/>
        <dbReference type="ChEBI" id="CHEBI:456216"/>
        <dbReference type="EC" id="2.7.1.217"/>
    </reaction>
</comment>
<comment type="catalytic activity">
    <reaction evidence="1">
        <text>3-dehydro-D-erythronate + ATP = 3-dehydro-4-O-phospho-D-erythronate + ADP + H(+)</text>
        <dbReference type="Rhea" id="RHEA:52556"/>
        <dbReference type="ChEBI" id="CHEBI:15378"/>
        <dbReference type="ChEBI" id="CHEBI:30616"/>
        <dbReference type="ChEBI" id="CHEBI:57958"/>
        <dbReference type="ChEBI" id="CHEBI:136593"/>
        <dbReference type="ChEBI" id="CHEBI:456216"/>
        <dbReference type="EC" id="2.7.1.217"/>
    </reaction>
</comment>
<comment type="disruption phenotype">
    <text evidence="1">Deletion mutant is unable to use L-threonate or D-erythronate as a carbon source.</text>
</comment>
<comment type="similarity">
    <text evidence="3">Belongs to the four-carbon acid sugar kinase family.</text>
</comment>
<protein>
    <recommendedName>
        <fullName evidence="2">3-oxo-tetronate kinase</fullName>
        <ecNumber evidence="1">2.7.1.217</ecNumber>
    </recommendedName>
    <alternativeName>
        <fullName evidence="3">3-dehydrotetronate 4-kinase</fullName>
    </alternativeName>
</protein>
<reference key="1">
    <citation type="journal article" date="2006" name="Nat. Biotechnol.">
        <title>Genome sequence of the bioplastic-producing 'Knallgas' bacterium Ralstonia eutropha H16.</title>
        <authorList>
            <person name="Pohlmann A."/>
            <person name="Fricke W.F."/>
            <person name="Reinecke F."/>
            <person name="Kusian B."/>
            <person name="Liesegang H."/>
            <person name="Cramm R."/>
            <person name="Eitinger T."/>
            <person name="Ewering C."/>
            <person name="Poetter M."/>
            <person name="Schwartz E."/>
            <person name="Strittmatter A."/>
            <person name="Voss I."/>
            <person name="Gottschalk G."/>
            <person name="Steinbuechel A."/>
            <person name="Friedrich B."/>
            <person name="Bowien B."/>
        </authorList>
    </citation>
    <scope>NUCLEOTIDE SEQUENCE [LARGE SCALE GENOMIC DNA]</scope>
    <source>
        <strain>ATCC 17699 / DSM 428 / KCTC 22496 / NCIMB 10442 / H16 / Stanier 337</strain>
    </source>
</reference>
<reference key="2">
    <citation type="journal article" date="2016" name="Proc. Natl. Acad. Sci. U.S.A.">
        <title>Assignment of function to a domain of unknown function: DUF1537 is a new kinase family in catabolic pathways for acid sugars.</title>
        <authorList>
            <person name="Zhang X."/>
            <person name="Carter M.S."/>
            <person name="Vetting M.W."/>
            <person name="San Francisco B."/>
            <person name="Zhao S."/>
            <person name="Al-Obaidi N.F."/>
            <person name="Solbiati J.O."/>
            <person name="Thiaville J.J."/>
            <person name="de Crecy-Lagard V."/>
            <person name="Jacobson M.P."/>
            <person name="Almo S.C."/>
            <person name="Gerlt J.A."/>
        </authorList>
    </citation>
    <scope>FUNCTION</scope>
    <scope>CATALYTIC ACTIVITY</scope>
    <scope>DISRUPTION PHENOTYPE</scope>
    <source>
        <strain>ATCC 17699 / DSM 428 / KCTC 22496 / NCIMB 10442 / H16 / Stanier 337</strain>
    </source>
</reference>
<reference evidence="6" key="3">
    <citation type="submission" date="2015-09" db="PDB data bank">
        <title>Crystal structure of a domain of unknown function (DUF1537) from Ralstonia eutropha H16 (H16_A1561), Target EFI-511666, complex with ADP.</title>
        <authorList>
            <person name="Vetting M.W."/>
            <person name="Al Obaidi N.F."/>
            <person name="Morisco L.L."/>
            <person name="Benach J."/>
            <person name="Wasserman S.R."/>
            <person name="Attonito J.D."/>
            <person name="Chamala S."/>
            <person name="Chowdhury S."/>
            <person name="Love J."/>
            <person name="Seidel R.D."/>
            <person name="Whalen K.L."/>
            <person name="Gerlt J.A."/>
            <person name="Almo S.C."/>
        </authorList>
    </citation>
    <scope>X-RAY CRYSTALLOGRAPHY (1.80 ANGSTROMS) IN COMPLEX WITH ADP</scope>
    <source>
        <strain>ATCC 17699 / DSM 428 / KCTC 22496 / NCIMB 10442 / H16 / Stanier 337</strain>
    </source>
</reference>
<name>OTNK_CUPNH</name>
<proteinExistence type="evidence at protein level"/>
<feature type="chain" id="PRO_0000439681" description="3-oxo-tetronate kinase">
    <location>
        <begin position="1"/>
        <end position="432"/>
    </location>
</feature>
<feature type="binding site" evidence="4">
    <location>
        <position position="155"/>
    </location>
    <ligand>
        <name>ATP</name>
        <dbReference type="ChEBI" id="CHEBI:30616"/>
    </ligand>
</feature>
<feature type="binding site" evidence="4">
    <location>
        <position position="272"/>
    </location>
    <ligand>
        <name>ATP</name>
        <dbReference type="ChEBI" id="CHEBI:30616"/>
    </ligand>
</feature>
<feature type="binding site" evidence="4">
    <location>
        <position position="324"/>
    </location>
    <ligand>
        <name>ATP</name>
        <dbReference type="ChEBI" id="CHEBI:30616"/>
    </ligand>
</feature>
<feature type="binding site" evidence="4">
    <location>
        <position position="344"/>
    </location>
    <ligand>
        <name>ATP</name>
        <dbReference type="ChEBI" id="CHEBI:30616"/>
    </ligand>
</feature>
<feature type="binding site" evidence="4">
    <location>
        <position position="348"/>
    </location>
    <ligand>
        <name>ATP</name>
        <dbReference type="ChEBI" id="CHEBI:30616"/>
    </ligand>
</feature>
<feature type="binding site" evidence="4">
    <location>
        <begin position="370"/>
        <end position="373"/>
    </location>
    <ligand>
        <name>ATP</name>
        <dbReference type="ChEBI" id="CHEBI:30616"/>
    </ligand>
</feature>
<feature type="binding site" evidence="4">
    <location>
        <position position="414"/>
    </location>
    <ligand>
        <name>ATP</name>
        <dbReference type="ChEBI" id="CHEBI:30616"/>
    </ligand>
</feature>
<feature type="strand" evidence="7">
    <location>
        <begin position="12"/>
        <end position="18"/>
    </location>
</feature>
<feature type="helix" evidence="7">
    <location>
        <begin position="19"/>
        <end position="31"/>
    </location>
</feature>
<feature type="strand" evidence="7">
    <location>
        <begin position="36"/>
        <end position="41"/>
    </location>
</feature>
<feature type="strand" evidence="7">
    <location>
        <begin position="47"/>
        <end position="50"/>
    </location>
</feature>
<feature type="strand" evidence="7">
    <location>
        <begin position="55"/>
        <end position="60"/>
    </location>
</feature>
<feature type="strand" evidence="7">
    <location>
        <begin position="64"/>
        <end position="66"/>
    </location>
</feature>
<feature type="helix" evidence="7">
    <location>
        <begin position="68"/>
        <end position="84"/>
    </location>
</feature>
<feature type="strand" evidence="7">
    <location>
        <begin position="88"/>
        <end position="93"/>
    </location>
</feature>
<feature type="helix" evidence="7">
    <location>
        <begin position="106"/>
        <end position="117"/>
    </location>
</feature>
<feature type="strand" evidence="7">
    <location>
        <begin position="122"/>
        <end position="125"/>
    </location>
</feature>
<feature type="helix" evidence="7">
    <location>
        <begin position="129"/>
        <end position="131"/>
    </location>
</feature>
<feature type="strand" evidence="7">
    <location>
        <begin position="133"/>
        <end position="136"/>
    </location>
</feature>
<feature type="strand" evidence="7">
    <location>
        <begin position="139"/>
        <end position="142"/>
    </location>
</feature>
<feature type="helix" evidence="7">
    <location>
        <begin position="147"/>
        <end position="149"/>
    </location>
</feature>
<feature type="helix" evidence="7">
    <location>
        <begin position="152"/>
        <end position="154"/>
    </location>
</feature>
<feature type="strand" evidence="7">
    <location>
        <begin position="156"/>
        <end position="158"/>
    </location>
</feature>
<feature type="helix" evidence="7">
    <location>
        <begin position="165"/>
        <end position="171"/>
    </location>
</feature>
<feature type="strand" evidence="7">
    <location>
        <begin position="177"/>
        <end position="180"/>
    </location>
</feature>
<feature type="helix" evidence="7">
    <location>
        <begin position="182"/>
        <end position="185"/>
    </location>
</feature>
<feature type="helix" evidence="7">
    <location>
        <begin position="189"/>
        <end position="201"/>
    </location>
</feature>
<feature type="strand" evidence="7">
    <location>
        <begin position="205"/>
        <end position="209"/>
    </location>
</feature>
<feature type="strand" evidence="7">
    <location>
        <begin position="211"/>
        <end position="213"/>
    </location>
</feature>
<feature type="helix" evidence="7">
    <location>
        <begin position="214"/>
        <end position="223"/>
    </location>
</feature>
<feature type="turn" evidence="7">
    <location>
        <begin position="224"/>
        <end position="226"/>
    </location>
</feature>
<feature type="strand" evidence="7">
    <location>
        <begin position="228"/>
        <end position="234"/>
    </location>
</feature>
<feature type="helix" evidence="7">
    <location>
        <begin position="235"/>
        <end position="237"/>
    </location>
</feature>
<feature type="helix" evidence="7">
    <location>
        <begin position="240"/>
        <end position="246"/>
    </location>
</feature>
<feature type="strand" evidence="7">
    <location>
        <begin position="266"/>
        <end position="270"/>
    </location>
</feature>
<feature type="helix" evidence="7">
    <location>
        <begin position="275"/>
        <end position="286"/>
    </location>
</feature>
<feature type="strand" evidence="7">
    <location>
        <begin position="291"/>
        <end position="293"/>
    </location>
</feature>
<feature type="helix" evidence="7">
    <location>
        <begin position="296"/>
        <end position="300"/>
    </location>
</feature>
<feature type="helix" evidence="7">
    <location>
        <begin position="305"/>
        <end position="314"/>
    </location>
</feature>
<feature type="strand" evidence="7">
    <location>
        <begin position="321"/>
        <end position="323"/>
    </location>
</feature>
<feature type="helix" evidence="7">
    <location>
        <begin position="328"/>
        <end position="338"/>
    </location>
</feature>
<feature type="helix" evidence="7">
    <location>
        <begin position="340"/>
        <end position="360"/>
    </location>
</feature>
<feature type="strand" evidence="7">
    <location>
        <begin position="365"/>
        <end position="370"/>
    </location>
</feature>
<feature type="helix" evidence="7">
    <location>
        <begin position="371"/>
        <end position="381"/>
    </location>
</feature>
<feature type="strand" evidence="7">
    <location>
        <begin position="385"/>
        <end position="393"/>
    </location>
</feature>
<feature type="strand" evidence="7">
    <location>
        <begin position="396"/>
        <end position="401"/>
    </location>
</feature>
<feature type="strand" evidence="7">
    <location>
        <begin position="403"/>
        <end position="405"/>
    </location>
</feature>
<feature type="strand" evidence="7">
    <location>
        <begin position="408"/>
        <end position="412"/>
    </location>
</feature>
<feature type="helix" evidence="7">
    <location>
        <begin position="421"/>
        <end position="429"/>
    </location>
</feature>
<keyword id="KW-0002">3D-structure</keyword>
<keyword id="KW-0067">ATP-binding</keyword>
<keyword id="KW-0119">Carbohydrate metabolism</keyword>
<keyword id="KW-0418">Kinase</keyword>
<keyword id="KW-0547">Nucleotide-binding</keyword>
<keyword id="KW-1185">Reference proteome</keyword>
<keyword id="KW-0808">Transferase</keyword>
<organism>
    <name type="scientific">Cupriavidus necator (strain ATCC 17699 / DSM 428 / KCTC 22496 / NCIMB 10442 / H16 / Stanier 337)</name>
    <name type="common">Ralstonia eutropha</name>
    <dbReference type="NCBI Taxonomy" id="381666"/>
    <lineage>
        <taxon>Bacteria</taxon>
        <taxon>Pseudomonadati</taxon>
        <taxon>Pseudomonadota</taxon>
        <taxon>Betaproteobacteria</taxon>
        <taxon>Burkholderiales</taxon>
        <taxon>Burkholderiaceae</taxon>
        <taxon>Cupriavidus</taxon>
    </lineage>
</organism>
<evidence type="ECO:0000269" key="1">
    <source>
    </source>
</evidence>
<evidence type="ECO:0000303" key="2">
    <source>
    </source>
</evidence>
<evidence type="ECO:0000305" key="3"/>
<evidence type="ECO:0000305" key="4">
    <source ref="3"/>
</evidence>
<evidence type="ECO:0000312" key="5">
    <source>
        <dbReference type="EMBL" id="CAJ92693.1"/>
    </source>
</evidence>
<evidence type="ECO:0007744" key="6">
    <source>
        <dbReference type="PDB" id="5DMH"/>
    </source>
</evidence>
<evidence type="ECO:0007829" key="7">
    <source>
        <dbReference type="PDB" id="5DMH"/>
    </source>
</evidence>
<dbReference type="EC" id="2.7.1.217" evidence="1"/>
<dbReference type="EMBL" id="AM260479">
    <property type="protein sequence ID" value="CAJ92693.1"/>
    <property type="molecule type" value="Genomic_DNA"/>
</dbReference>
<dbReference type="RefSeq" id="WP_011615151.1">
    <property type="nucleotide sequence ID" value="NC_008313.1"/>
</dbReference>
<dbReference type="PDB" id="5DMH">
    <property type="method" value="X-ray"/>
    <property type="resolution" value="1.80 A"/>
    <property type="chains" value="A/B=1-432"/>
</dbReference>
<dbReference type="PDBsum" id="5DMH"/>
<dbReference type="SMR" id="Q0KBC8"/>
<dbReference type="STRING" id="381666.H16_A1561"/>
<dbReference type="KEGG" id="reh:H16_A1561"/>
<dbReference type="PATRIC" id="fig|381666.6.peg.1946"/>
<dbReference type="eggNOG" id="COG3395">
    <property type="taxonomic scope" value="Bacteria"/>
</dbReference>
<dbReference type="HOGENOM" id="CLU_029424_1_0_4"/>
<dbReference type="OrthoDB" id="191465at2"/>
<dbReference type="BioCyc" id="MetaCyc:MONOMER-20189"/>
<dbReference type="BRENDA" id="2.7.1.217">
    <property type="organism ID" value="231"/>
</dbReference>
<dbReference type="EvolutionaryTrace" id="Q0KBC8"/>
<dbReference type="Proteomes" id="UP000008210">
    <property type="component" value="Chromosome 1"/>
</dbReference>
<dbReference type="GO" id="GO:0005524">
    <property type="term" value="F:ATP binding"/>
    <property type="evidence" value="ECO:0007669"/>
    <property type="project" value="UniProtKB-KW"/>
</dbReference>
<dbReference type="GO" id="GO:0016301">
    <property type="term" value="F:kinase activity"/>
    <property type="evidence" value="ECO:0007669"/>
    <property type="project" value="UniProtKB-KW"/>
</dbReference>
<dbReference type="Gene3D" id="3.40.980.20">
    <property type="entry name" value="Four-carbon acid sugar kinase, nucleotide binding domain"/>
    <property type="match status" value="1"/>
</dbReference>
<dbReference type="Gene3D" id="3.40.50.10840">
    <property type="entry name" value="Putative sugar-binding, N-terminal domain"/>
    <property type="match status" value="1"/>
</dbReference>
<dbReference type="InterPro" id="IPR010737">
    <property type="entry name" value="4-carb_acid_sugar_kinase_N"/>
</dbReference>
<dbReference type="InterPro" id="IPR037051">
    <property type="entry name" value="4-carb_acid_sugar_kinase_N_sf"/>
</dbReference>
<dbReference type="InterPro" id="IPR031475">
    <property type="entry name" value="NBD_C"/>
</dbReference>
<dbReference type="InterPro" id="IPR042213">
    <property type="entry name" value="NBD_C_sf"/>
</dbReference>
<dbReference type="InterPro" id="IPR050007">
    <property type="entry name" value="OtnK"/>
</dbReference>
<dbReference type="NCBIfam" id="NF043035">
    <property type="entry name" value="OxoTetrKin"/>
    <property type="match status" value="1"/>
</dbReference>
<dbReference type="Pfam" id="PF17042">
    <property type="entry name" value="NBD_C"/>
    <property type="match status" value="1"/>
</dbReference>
<dbReference type="Pfam" id="PF07005">
    <property type="entry name" value="SBD_N"/>
    <property type="match status" value="1"/>
</dbReference>
<dbReference type="SUPFAM" id="SSF142764">
    <property type="entry name" value="YgbK-like"/>
    <property type="match status" value="1"/>
</dbReference>
<sequence>MTAGTLAHRPLLGCIADDFTGATDLANTLVRNGMRTVQTIGLPDVGAVQDIGEADALVVALKSRTIPAVEAVAQSLAALQWLRAQGCRQFVFKYCSTFDSTDAGNIGPVAEALLAALDSDFTIACPAFPENGRTIFRGHLFVGDALLNESGMEHHPLTPMTDASLVRVLQRQSKNKVGLLRYDAVARGAHATAERIAALRSDGVRMAIADAVSDADLFTLGEACANLPLITGGSGIALGLPENFRRAGLLPQRGDAASVPAIDGPGVVLAGSASRATNGQVARWLEQGRPALRIDPLALARGEAVADAALAFAAGHGEPVLIYATSSPDEVKAVQAELGVERAGHLVEQCLATVAAGLLARGTRRFVVAGGETSGAVVQALGVRALRIGAQIAPGVPATVTLDAKPLALALKSGNFGGPDFFDEALRQLGGH</sequence>
<gene>
    <name evidence="2" type="primary">otnK</name>
    <name evidence="5" type="ordered locus">H16_A1561</name>
</gene>